<sequence length="428" mass="45482">MEFLDLPGRSRASGTVRLPGSKSISNRVLLLAALAEGVTDVYDVLDSDDTRYMLAALQALGVGVEDRGDNHWRVTGVAGAFPARQAELFLGNAGTAFRPLTAVLALSGGDYVLDGVARMHERPIGDLVDALRQLGGRIDYRGTLGFPPLHVHPPQAGADVAHIRGNVSSQFLTGLLMALPLRRLRTRVEVVGELISKPYIEITLAMLRRFGVEVARDGWQAFSVAADACYRSPREIYVEGDASSASYFLAAGAIGGGPVRVEGVGRDSVQGDVGFADALAAMGARIAMGPNWIEACAPAQGRLKAIDLDCNAIPDAAMTLAVAALFADGTTTLRNIASWRVKETDRIAAMATELRKVGATVEEGDDFLRVTPPETLRAGAVIDTYDDHRMAMCLSLVSLGGVAVRINDPGCVAKTFPGYFNAFAEIAR</sequence>
<feature type="chain" id="PRO_1000012503" description="3-phosphoshikimate 1-carboxyvinyltransferase">
    <location>
        <begin position="1"/>
        <end position="428"/>
    </location>
</feature>
<feature type="active site" description="Proton acceptor" evidence="1">
    <location>
        <position position="315"/>
    </location>
</feature>
<feature type="binding site" evidence="1">
    <location>
        <position position="22"/>
    </location>
    <ligand>
        <name>3-phosphoshikimate</name>
        <dbReference type="ChEBI" id="CHEBI:145989"/>
    </ligand>
</feature>
<feature type="binding site" evidence="1">
    <location>
        <position position="22"/>
    </location>
    <ligand>
        <name>phosphoenolpyruvate</name>
        <dbReference type="ChEBI" id="CHEBI:58702"/>
    </ligand>
</feature>
<feature type="binding site" evidence="1">
    <location>
        <position position="23"/>
    </location>
    <ligand>
        <name>3-phosphoshikimate</name>
        <dbReference type="ChEBI" id="CHEBI:145989"/>
    </ligand>
</feature>
<feature type="binding site" evidence="1">
    <location>
        <position position="27"/>
    </location>
    <ligand>
        <name>3-phosphoshikimate</name>
        <dbReference type="ChEBI" id="CHEBI:145989"/>
    </ligand>
</feature>
<feature type="binding site" evidence="1">
    <location>
        <position position="94"/>
    </location>
    <ligand>
        <name>phosphoenolpyruvate</name>
        <dbReference type="ChEBI" id="CHEBI:58702"/>
    </ligand>
</feature>
<feature type="binding site" evidence="1">
    <location>
        <position position="122"/>
    </location>
    <ligand>
        <name>phosphoenolpyruvate</name>
        <dbReference type="ChEBI" id="CHEBI:58702"/>
    </ligand>
</feature>
<feature type="binding site" evidence="1">
    <location>
        <position position="168"/>
    </location>
    <ligand>
        <name>3-phosphoshikimate</name>
        <dbReference type="ChEBI" id="CHEBI:145989"/>
    </ligand>
</feature>
<feature type="binding site" evidence="1">
    <location>
        <position position="169"/>
    </location>
    <ligand>
        <name>3-phosphoshikimate</name>
        <dbReference type="ChEBI" id="CHEBI:145989"/>
    </ligand>
</feature>
<feature type="binding site" evidence="1">
    <location>
        <position position="170"/>
    </location>
    <ligand>
        <name>3-phosphoshikimate</name>
        <dbReference type="ChEBI" id="CHEBI:145989"/>
    </ligand>
</feature>
<feature type="binding site" evidence="1">
    <location>
        <position position="170"/>
    </location>
    <ligand>
        <name>phosphoenolpyruvate</name>
        <dbReference type="ChEBI" id="CHEBI:58702"/>
    </ligand>
</feature>
<feature type="binding site" evidence="1">
    <location>
        <position position="196"/>
    </location>
    <ligand>
        <name>3-phosphoshikimate</name>
        <dbReference type="ChEBI" id="CHEBI:145989"/>
    </ligand>
</feature>
<feature type="binding site" evidence="1">
    <location>
        <position position="315"/>
    </location>
    <ligand>
        <name>3-phosphoshikimate</name>
        <dbReference type="ChEBI" id="CHEBI:145989"/>
    </ligand>
</feature>
<feature type="binding site" evidence="1">
    <location>
        <position position="342"/>
    </location>
    <ligand>
        <name>3-phosphoshikimate</name>
        <dbReference type="ChEBI" id="CHEBI:145989"/>
    </ligand>
</feature>
<feature type="binding site" evidence="1">
    <location>
        <position position="346"/>
    </location>
    <ligand>
        <name>phosphoenolpyruvate</name>
        <dbReference type="ChEBI" id="CHEBI:58702"/>
    </ligand>
</feature>
<feature type="binding site" evidence="1">
    <location>
        <position position="389"/>
    </location>
    <ligand>
        <name>phosphoenolpyruvate</name>
        <dbReference type="ChEBI" id="CHEBI:58702"/>
    </ligand>
</feature>
<feature type="binding site" evidence="1">
    <location>
        <position position="414"/>
    </location>
    <ligand>
        <name>phosphoenolpyruvate</name>
        <dbReference type="ChEBI" id="CHEBI:58702"/>
    </ligand>
</feature>
<reference key="1">
    <citation type="journal article" date="2006" name="J. Bacteriol.">
        <title>The genome sequence of the obligately chemolithoautotrophic, facultatively anaerobic bacterium Thiobacillus denitrificans.</title>
        <authorList>
            <person name="Beller H.R."/>
            <person name="Chain P.S."/>
            <person name="Letain T.E."/>
            <person name="Chakicherla A."/>
            <person name="Larimer F.W."/>
            <person name="Richardson P.M."/>
            <person name="Coleman M.A."/>
            <person name="Wood A.P."/>
            <person name="Kelly D.P."/>
        </authorList>
    </citation>
    <scope>NUCLEOTIDE SEQUENCE [LARGE SCALE GENOMIC DNA]</scope>
    <source>
        <strain>ATCC 25259 / T1</strain>
    </source>
</reference>
<gene>
    <name evidence="1" type="primary">aroA</name>
    <name type="ordered locus">Tbd_0954</name>
</gene>
<dbReference type="EC" id="2.5.1.19" evidence="1"/>
<dbReference type="EMBL" id="CP000116">
    <property type="protein sequence ID" value="AAZ96907.1"/>
    <property type="molecule type" value="Genomic_DNA"/>
</dbReference>
<dbReference type="RefSeq" id="WP_011311466.1">
    <property type="nucleotide sequence ID" value="NC_007404.1"/>
</dbReference>
<dbReference type="SMR" id="Q3SK83"/>
<dbReference type="STRING" id="292415.Tbd_0954"/>
<dbReference type="KEGG" id="tbd:Tbd_0954"/>
<dbReference type="eggNOG" id="COG0128">
    <property type="taxonomic scope" value="Bacteria"/>
</dbReference>
<dbReference type="HOGENOM" id="CLU_024321_0_0_4"/>
<dbReference type="OrthoDB" id="9809920at2"/>
<dbReference type="UniPathway" id="UPA00053">
    <property type="reaction ID" value="UER00089"/>
</dbReference>
<dbReference type="Proteomes" id="UP000008291">
    <property type="component" value="Chromosome"/>
</dbReference>
<dbReference type="GO" id="GO:0005737">
    <property type="term" value="C:cytoplasm"/>
    <property type="evidence" value="ECO:0007669"/>
    <property type="project" value="UniProtKB-SubCell"/>
</dbReference>
<dbReference type="GO" id="GO:0003866">
    <property type="term" value="F:3-phosphoshikimate 1-carboxyvinyltransferase activity"/>
    <property type="evidence" value="ECO:0007669"/>
    <property type="project" value="UniProtKB-UniRule"/>
</dbReference>
<dbReference type="GO" id="GO:0008652">
    <property type="term" value="P:amino acid biosynthetic process"/>
    <property type="evidence" value="ECO:0007669"/>
    <property type="project" value="UniProtKB-KW"/>
</dbReference>
<dbReference type="GO" id="GO:0009073">
    <property type="term" value="P:aromatic amino acid family biosynthetic process"/>
    <property type="evidence" value="ECO:0007669"/>
    <property type="project" value="UniProtKB-KW"/>
</dbReference>
<dbReference type="GO" id="GO:0009423">
    <property type="term" value="P:chorismate biosynthetic process"/>
    <property type="evidence" value="ECO:0007669"/>
    <property type="project" value="UniProtKB-UniRule"/>
</dbReference>
<dbReference type="CDD" id="cd01556">
    <property type="entry name" value="EPSP_synthase"/>
    <property type="match status" value="1"/>
</dbReference>
<dbReference type="FunFam" id="3.65.10.10:FF:000003">
    <property type="entry name" value="3-phosphoshikimate 1-carboxyvinyltransferase"/>
    <property type="match status" value="1"/>
</dbReference>
<dbReference type="FunFam" id="3.65.10.10:FF:000005">
    <property type="entry name" value="3-phosphoshikimate 1-carboxyvinyltransferase"/>
    <property type="match status" value="1"/>
</dbReference>
<dbReference type="Gene3D" id="3.65.10.10">
    <property type="entry name" value="Enolpyruvate transferase domain"/>
    <property type="match status" value="2"/>
</dbReference>
<dbReference type="HAMAP" id="MF_00210">
    <property type="entry name" value="EPSP_synth"/>
    <property type="match status" value="1"/>
</dbReference>
<dbReference type="InterPro" id="IPR001986">
    <property type="entry name" value="Enolpyruvate_Tfrase_dom"/>
</dbReference>
<dbReference type="InterPro" id="IPR036968">
    <property type="entry name" value="Enolpyruvate_Tfrase_sf"/>
</dbReference>
<dbReference type="InterPro" id="IPR006264">
    <property type="entry name" value="EPSP_synthase"/>
</dbReference>
<dbReference type="InterPro" id="IPR023193">
    <property type="entry name" value="EPSP_synthase_CS"/>
</dbReference>
<dbReference type="InterPro" id="IPR013792">
    <property type="entry name" value="RNA3'P_cycl/enolpyr_Trfase_a/b"/>
</dbReference>
<dbReference type="NCBIfam" id="TIGR01356">
    <property type="entry name" value="aroA"/>
    <property type="match status" value="1"/>
</dbReference>
<dbReference type="PANTHER" id="PTHR21090">
    <property type="entry name" value="AROM/DEHYDROQUINATE SYNTHASE"/>
    <property type="match status" value="1"/>
</dbReference>
<dbReference type="PANTHER" id="PTHR21090:SF5">
    <property type="entry name" value="PENTAFUNCTIONAL AROM POLYPEPTIDE"/>
    <property type="match status" value="1"/>
</dbReference>
<dbReference type="Pfam" id="PF00275">
    <property type="entry name" value="EPSP_synthase"/>
    <property type="match status" value="1"/>
</dbReference>
<dbReference type="PIRSF" id="PIRSF000505">
    <property type="entry name" value="EPSPS"/>
    <property type="match status" value="1"/>
</dbReference>
<dbReference type="SUPFAM" id="SSF55205">
    <property type="entry name" value="EPT/RTPC-like"/>
    <property type="match status" value="1"/>
</dbReference>
<dbReference type="PROSITE" id="PS00104">
    <property type="entry name" value="EPSP_SYNTHASE_1"/>
    <property type="match status" value="1"/>
</dbReference>
<dbReference type="PROSITE" id="PS00885">
    <property type="entry name" value="EPSP_SYNTHASE_2"/>
    <property type="match status" value="1"/>
</dbReference>
<accession>Q3SK83</accession>
<comment type="function">
    <text evidence="1">Catalyzes the transfer of the enolpyruvyl moiety of phosphoenolpyruvate (PEP) to the 5-hydroxyl of shikimate-3-phosphate (S3P) to produce enolpyruvyl shikimate-3-phosphate and inorganic phosphate.</text>
</comment>
<comment type="catalytic activity">
    <reaction evidence="1">
        <text>3-phosphoshikimate + phosphoenolpyruvate = 5-O-(1-carboxyvinyl)-3-phosphoshikimate + phosphate</text>
        <dbReference type="Rhea" id="RHEA:21256"/>
        <dbReference type="ChEBI" id="CHEBI:43474"/>
        <dbReference type="ChEBI" id="CHEBI:57701"/>
        <dbReference type="ChEBI" id="CHEBI:58702"/>
        <dbReference type="ChEBI" id="CHEBI:145989"/>
        <dbReference type="EC" id="2.5.1.19"/>
    </reaction>
    <physiologicalReaction direction="left-to-right" evidence="1">
        <dbReference type="Rhea" id="RHEA:21257"/>
    </physiologicalReaction>
</comment>
<comment type="pathway">
    <text evidence="1">Metabolic intermediate biosynthesis; chorismate biosynthesis; chorismate from D-erythrose 4-phosphate and phosphoenolpyruvate: step 6/7.</text>
</comment>
<comment type="subunit">
    <text evidence="1">Monomer.</text>
</comment>
<comment type="subcellular location">
    <subcellularLocation>
        <location evidence="1">Cytoplasm</location>
    </subcellularLocation>
</comment>
<comment type="similarity">
    <text evidence="1">Belongs to the EPSP synthase family.</text>
</comment>
<evidence type="ECO:0000255" key="1">
    <source>
        <dbReference type="HAMAP-Rule" id="MF_00210"/>
    </source>
</evidence>
<proteinExistence type="inferred from homology"/>
<protein>
    <recommendedName>
        <fullName evidence="1">3-phosphoshikimate 1-carboxyvinyltransferase</fullName>
        <ecNumber evidence="1">2.5.1.19</ecNumber>
    </recommendedName>
    <alternativeName>
        <fullName evidence="1">5-enolpyruvylshikimate-3-phosphate synthase</fullName>
        <shortName evidence="1">EPSP synthase</shortName>
        <shortName evidence="1">EPSPS</shortName>
    </alternativeName>
</protein>
<name>AROA_THIDA</name>
<keyword id="KW-0028">Amino-acid biosynthesis</keyword>
<keyword id="KW-0057">Aromatic amino acid biosynthesis</keyword>
<keyword id="KW-0963">Cytoplasm</keyword>
<keyword id="KW-1185">Reference proteome</keyword>
<keyword id="KW-0808">Transferase</keyword>
<organism>
    <name type="scientific">Thiobacillus denitrificans (strain ATCC 25259 / T1)</name>
    <dbReference type="NCBI Taxonomy" id="292415"/>
    <lineage>
        <taxon>Bacteria</taxon>
        <taxon>Pseudomonadati</taxon>
        <taxon>Pseudomonadota</taxon>
        <taxon>Betaproteobacteria</taxon>
        <taxon>Nitrosomonadales</taxon>
        <taxon>Thiobacillaceae</taxon>
        <taxon>Thiobacillus</taxon>
    </lineage>
</organism>